<proteinExistence type="inferred from homology"/>
<gene>
    <name evidence="1" type="primary">murE</name>
    <name type="ordered locus">Lreu_1937</name>
</gene>
<keyword id="KW-0067">ATP-binding</keyword>
<keyword id="KW-0131">Cell cycle</keyword>
<keyword id="KW-0132">Cell division</keyword>
<keyword id="KW-0133">Cell shape</keyword>
<keyword id="KW-0961">Cell wall biogenesis/degradation</keyword>
<keyword id="KW-0963">Cytoplasm</keyword>
<keyword id="KW-0436">Ligase</keyword>
<keyword id="KW-0547">Nucleotide-binding</keyword>
<keyword id="KW-0573">Peptidoglycan synthesis</keyword>
<keyword id="KW-1185">Reference proteome</keyword>
<organism>
    <name type="scientific">Limosilactobacillus reuteri (strain DSM 20016)</name>
    <name type="common">Lactobacillus reuteri</name>
    <dbReference type="NCBI Taxonomy" id="557436"/>
    <lineage>
        <taxon>Bacteria</taxon>
        <taxon>Bacillati</taxon>
        <taxon>Bacillota</taxon>
        <taxon>Bacilli</taxon>
        <taxon>Lactobacillales</taxon>
        <taxon>Lactobacillaceae</taxon>
        <taxon>Limosilactobacillus</taxon>
    </lineage>
</organism>
<evidence type="ECO:0000255" key="1">
    <source>
        <dbReference type="HAMAP-Rule" id="MF_00208"/>
    </source>
</evidence>
<reference key="1">
    <citation type="journal article" date="2011" name="PLoS Genet.">
        <title>The evolution of host specialization in the vertebrate gut symbiont Lactobacillus reuteri.</title>
        <authorList>
            <person name="Frese S.A."/>
            <person name="Benson A.K."/>
            <person name="Tannock G.W."/>
            <person name="Loach D.M."/>
            <person name="Kim J."/>
            <person name="Zhang M."/>
            <person name="Oh P.L."/>
            <person name="Heng N.C."/>
            <person name="Patil P.B."/>
            <person name="Juge N."/>
            <person name="Mackenzie D.A."/>
            <person name="Pearson B.M."/>
            <person name="Lapidus A."/>
            <person name="Dalin E."/>
            <person name="Tice H."/>
            <person name="Goltsman E."/>
            <person name="Land M."/>
            <person name="Hauser L."/>
            <person name="Ivanova N."/>
            <person name="Kyrpides N.C."/>
            <person name="Walter J."/>
        </authorList>
    </citation>
    <scope>NUCLEOTIDE SEQUENCE [LARGE SCALE GENOMIC DNA]</scope>
    <source>
        <strain>DSM 20016</strain>
    </source>
</reference>
<comment type="function">
    <text evidence="1">Catalyzes the addition of an amino acid to the nucleotide precursor UDP-N-acetylmuramoyl-L-alanyl-D-glutamate (UMAG) in the biosynthesis of bacterial cell-wall peptidoglycan.</text>
</comment>
<comment type="pathway">
    <text evidence="1">Cell wall biogenesis; peptidoglycan biosynthesis.</text>
</comment>
<comment type="subcellular location">
    <subcellularLocation>
        <location evidence="1">Cytoplasm</location>
    </subcellularLocation>
</comment>
<comment type="PTM">
    <text evidence="1">Carboxylation is probably crucial for Mg(2+) binding and, consequently, for the gamma-phosphate positioning of ATP.</text>
</comment>
<comment type="similarity">
    <text evidence="1">Belongs to the MurCDEF family. MurE subfamily.</text>
</comment>
<sequence>MELHITPALALLREHHLLDHVSNLTDFTATSVSYDSRKVKSGTLFFCKGNFLPKYLASAKEKGAIAYVAEKEYPEGEGLPAIIVNDEQKAMSLLGAAFYGYPQNDLFIIAITGTKGKTTTAYFADHILAQSTADHIALFSTLDRILGNKPEDKFKSDLTTPESLDLFHDMRVAVDNGMTHLVMEVSSQAYKKNRIYGLKYDVGIFLNISPDHIGRNEHPTFADYLHCKEQLLVNSAKCLINAETEKFTDVYYTAKATTQPEDIFLFARRGANIELPDNAQIDFEYRNDLEDLHESEFELTALTEKAKQLNLDGRYKTSVPGDYNEGNAVAAIIASGLAGASANDAVETLNHVHIRGRMEMINSNTHGTIYVDYAHNYASLKRLLAFLKRQTNAGKVTVVLGATGDKGISRRPGFGKALTEEQPDEVILTTDDPGFEDPMTIAREIDSYIDHDKVKHIQFEMDRETAIKKAIDGSENDDIVVLAGKGEDPYQKVNGEDVPYPTDVKIARDYINELER</sequence>
<dbReference type="EC" id="6.3.2.-" evidence="1"/>
<dbReference type="EMBL" id="CP000705">
    <property type="protein sequence ID" value="ABQ84169.1"/>
    <property type="molecule type" value="Genomic_DNA"/>
</dbReference>
<dbReference type="RefSeq" id="WP_003669475.1">
    <property type="nucleotide sequence ID" value="NC_009513.1"/>
</dbReference>
<dbReference type="SMR" id="A5VMU5"/>
<dbReference type="STRING" id="557436.Lreu_1937"/>
<dbReference type="KEGG" id="lre:Lreu_1937"/>
<dbReference type="PATRIC" id="fig|557436.17.peg.502"/>
<dbReference type="eggNOG" id="COG0769">
    <property type="taxonomic scope" value="Bacteria"/>
</dbReference>
<dbReference type="HOGENOM" id="CLU_022291_4_2_9"/>
<dbReference type="UniPathway" id="UPA00219"/>
<dbReference type="Proteomes" id="UP000001991">
    <property type="component" value="Chromosome"/>
</dbReference>
<dbReference type="GO" id="GO:0005737">
    <property type="term" value="C:cytoplasm"/>
    <property type="evidence" value="ECO:0007669"/>
    <property type="project" value="UniProtKB-SubCell"/>
</dbReference>
<dbReference type="GO" id="GO:0016881">
    <property type="term" value="F:acid-amino acid ligase activity"/>
    <property type="evidence" value="ECO:0007669"/>
    <property type="project" value="UniProtKB-UniRule"/>
</dbReference>
<dbReference type="GO" id="GO:0005524">
    <property type="term" value="F:ATP binding"/>
    <property type="evidence" value="ECO:0007669"/>
    <property type="project" value="UniProtKB-UniRule"/>
</dbReference>
<dbReference type="GO" id="GO:0000287">
    <property type="term" value="F:magnesium ion binding"/>
    <property type="evidence" value="ECO:0007669"/>
    <property type="project" value="UniProtKB-UniRule"/>
</dbReference>
<dbReference type="GO" id="GO:0051301">
    <property type="term" value="P:cell division"/>
    <property type="evidence" value="ECO:0007669"/>
    <property type="project" value="UniProtKB-KW"/>
</dbReference>
<dbReference type="GO" id="GO:0071555">
    <property type="term" value="P:cell wall organization"/>
    <property type="evidence" value="ECO:0007669"/>
    <property type="project" value="UniProtKB-KW"/>
</dbReference>
<dbReference type="GO" id="GO:0009252">
    <property type="term" value="P:peptidoglycan biosynthetic process"/>
    <property type="evidence" value="ECO:0007669"/>
    <property type="project" value="UniProtKB-UniRule"/>
</dbReference>
<dbReference type="GO" id="GO:0008360">
    <property type="term" value="P:regulation of cell shape"/>
    <property type="evidence" value="ECO:0007669"/>
    <property type="project" value="UniProtKB-KW"/>
</dbReference>
<dbReference type="Gene3D" id="3.90.190.20">
    <property type="entry name" value="Mur ligase, C-terminal domain"/>
    <property type="match status" value="1"/>
</dbReference>
<dbReference type="Gene3D" id="3.40.1190.10">
    <property type="entry name" value="Mur-like, catalytic domain"/>
    <property type="match status" value="1"/>
</dbReference>
<dbReference type="Gene3D" id="3.40.1390.10">
    <property type="entry name" value="MurE/MurF, N-terminal domain"/>
    <property type="match status" value="1"/>
</dbReference>
<dbReference type="HAMAP" id="MF_00208">
    <property type="entry name" value="MurE"/>
    <property type="match status" value="1"/>
</dbReference>
<dbReference type="InterPro" id="IPR036565">
    <property type="entry name" value="Mur-like_cat_sf"/>
</dbReference>
<dbReference type="InterPro" id="IPR004101">
    <property type="entry name" value="Mur_ligase_C"/>
</dbReference>
<dbReference type="InterPro" id="IPR036615">
    <property type="entry name" value="Mur_ligase_C_dom_sf"/>
</dbReference>
<dbReference type="InterPro" id="IPR013221">
    <property type="entry name" value="Mur_ligase_cen"/>
</dbReference>
<dbReference type="InterPro" id="IPR005761">
    <property type="entry name" value="UDP-N-AcMur-Glu-dNH2Pim_ligase"/>
</dbReference>
<dbReference type="NCBIfam" id="TIGR01085">
    <property type="entry name" value="murE"/>
    <property type="match status" value="1"/>
</dbReference>
<dbReference type="NCBIfam" id="NF001130">
    <property type="entry name" value="PRK00139.2-4"/>
    <property type="match status" value="1"/>
</dbReference>
<dbReference type="PANTHER" id="PTHR23135">
    <property type="entry name" value="MUR LIGASE FAMILY MEMBER"/>
    <property type="match status" value="1"/>
</dbReference>
<dbReference type="PANTHER" id="PTHR23135:SF4">
    <property type="entry name" value="UDP-N-ACETYLMURAMOYL-L-ALANYL-D-GLUTAMATE--2,6-DIAMINOPIMELATE LIGASE MURE HOMOLOG, CHLOROPLASTIC"/>
    <property type="match status" value="1"/>
</dbReference>
<dbReference type="Pfam" id="PF02875">
    <property type="entry name" value="Mur_ligase_C"/>
    <property type="match status" value="1"/>
</dbReference>
<dbReference type="Pfam" id="PF08245">
    <property type="entry name" value="Mur_ligase_M"/>
    <property type="match status" value="1"/>
</dbReference>
<dbReference type="SUPFAM" id="SSF53623">
    <property type="entry name" value="MurD-like peptide ligases, catalytic domain"/>
    <property type="match status" value="1"/>
</dbReference>
<dbReference type="SUPFAM" id="SSF53244">
    <property type="entry name" value="MurD-like peptide ligases, peptide-binding domain"/>
    <property type="match status" value="1"/>
</dbReference>
<protein>
    <recommendedName>
        <fullName evidence="1">UDP-N-acetylmuramyl-tripeptide synthetase</fullName>
        <ecNumber evidence="1">6.3.2.-</ecNumber>
    </recommendedName>
    <alternativeName>
        <fullName evidence="1">UDP-MurNAc-tripeptide synthetase</fullName>
    </alternativeName>
</protein>
<accession>A5VMU5</accession>
<feature type="chain" id="PRO_1000058588" description="UDP-N-acetylmuramyl-tripeptide synthetase">
    <location>
        <begin position="1"/>
        <end position="516"/>
    </location>
</feature>
<feature type="binding site" evidence="1">
    <location>
        <position position="36"/>
    </location>
    <ligand>
        <name>UDP-N-acetyl-alpha-D-muramoyl-L-alanyl-D-glutamate</name>
        <dbReference type="ChEBI" id="CHEBI:83900"/>
    </ligand>
</feature>
<feature type="binding site" evidence="1">
    <location>
        <begin position="113"/>
        <end position="119"/>
    </location>
    <ligand>
        <name>ATP</name>
        <dbReference type="ChEBI" id="CHEBI:30616"/>
    </ligand>
</feature>
<feature type="binding site" evidence="1">
    <location>
        <begin position="159"/>
        <end position="160"/>
    </location>
    <ligand>
        <name>UDP-N-acetyl-alpha-D-muramoyl-L-alanyl-D-glutamate</name>
        <dbReference type="ChEBI" id="CHEBI:83900"/>
    </ligand>
</feature>
<feature type="binding site" evidence="1">
    <location>
        <position position="186"/>
    </location>
    <ligand>
        <name>UDP-N-acetyl-alpha-D-muramoyl-L-alanyl-D-glutamate</name>
        <dbReference type="ChEBI" id="CHEBI:83900"/>
    </ligand>
</feature>
<feature type="binding site" evidence="1">
    <location>
        <position position="194"/>
    </location>
    <ligand>
        <name>UDP-N-acetyl-alpha-D-muramoyl-L-alanyl-D-glutamate</name>
        <dbReference type="ChEBI" id="CHEBI:83900"/>
    </ligand>
</feature>
<feature type="modified residue" description="N6-carboxylysine" evidence="1">
    <location>
        <position position="228"/>
    </location>
</feature>
<name>MURE_LIMRD</name>